<organism>
    <name type="scientific">Arabidopsis thaliana</name>
    <name type="common">Mouse-ear cress</name>
    <dbReference type="NCBI Taxonomy" id="3702"/>
    <lineage>
        <taxon>Eukaryota</taxon>
        <taxon>Viridiplantae</taxon>
        <taxon>Streptophyta</taxon>
        <taxon>Embryophyta</taxon>
        <taxon>Tracheophyta</taxon>
        <taxon>Spermatophyta</taxon>
        <taxon>Magnoliopsida</taxon>
        <taxon>eudicotyledons</taxon>
        <taxon>Gunneridae</taxon>
        <taxon>Pentapetalae</taxon>
        <taxon>rosids</taxon>
        <taxon>malvids</taxon>
        <taxon>Brassicales</taxon>
        <taxon>Brassicaceae</taxon>
        <taxon>Camelineae</taxon>
        <taxon>Arabidopsis</taxon>
    </lineage>
</organism>
<dbReference type="EC" id="2.5.1.18"/>
<dbReference type="EMBL" id="AC011765">
    <property type="protein sequence ID" value="AAG52384.1"/>
    <property type="molecule type" value="Genomic_DNA"/>
</dbReference>
<dbReference type="EMBL" id="CP002684">
    <property type="protein sequence ID" value="AEE35613.1"/>
    <property type="molecule type" value="Genomic_DNA"/>
</dbReference>
<dbReference type="EMBL" id="AK117614">
    <property type="protein sequence ID" value="BAC42270.1"/>
    <property type="molecule type" value="mRNA"/>
</dbReference>
<dbReference type="EMBL" id="BT005419">
    <property type="protein sequence ID" value="AAO63839.1"/>
    <property type="molecule type" value="mRNA"/>
</dbReference>
<dbReference type="EMBL" id="AY088052">
    <property type="protein sequence ID" value="AAM65598.1"/>
    <property type="molecule type" value="mRNA"/>
</dbReference>
<dbReference type="PIR" id="A96775">
    <property type="entry name" value="A96775"/>
</dbReference>
<dbReference type="RefSeq" id="NP_177598.1">
    <property type="nucleotide sequence ID" value="NM_106118.3"/>
</dbReference>
<dbReference type="SMR" id="Q9CA57"/>
<dbReference type="FunCoup" id="Q9CA57">
    <property type="interactions" value="155"/>
</dbReference>
<dbReference type="STRING" id="3702.Q9CA57"/>
<dbReference type="iPTMnet" id="Q9CA57"/>
<dbReference type="PaxDb" id="3702-AT1G74590.1"/>
<dbReference type="ProteomicsDB" id="247337"/>
<dbReference type="EnsemblPlants" id="AT1G74590.1">
    <property type="protein sequence ID" value="AT1G74590.1"/>
    <property type="gene ID" value="AT1G74590"/>
</dbReference>
<dbReference type="GeneID" id="843799"/>
<dbReference type="Gramene" id="AT1G74590.1">
    <property type="protein sequence ID" value="AT1G74590.1"/>
    <property type="gene ID" value="AT1G74590"/>
</dbReference>
<dbReference type="KEGG" id="ath:AT1G74590"/>
<dbReference type="Araport" id="AT1G74590"/>
<dbReference type="TAIR" id="AT1G74590">
    <property type="gene designation" value="GSTU10"/>
</dbReference>
<dbReference type="eggNOG" id="KOG0406">
    <property type="taxonomic scope" value="Eukaryota"/>
</dbReference>
<dbReference type="HOGENOM" id="CLU_011226_18_0_1"/>
<dbReference type="InParanoid" id="Q9CA57"/>
<dbReference type="OMA" id="LYGMWAT"/>
<dbReference type="OrthoDB" id="4951845at2759"/>
<dbReference type="PhylomeDB" id="Q9CA57"/>
<dbReference type="BioCyc" id="ARA:AT1G74590-MONOMER"/>
<dbReference type="PRO" id="PR:Q9CA57"/>
<dbReference type="Proteomes" id="UP000006548">
    <property type="component" value="Chromosome 1"/>
</dbReference>
<dbReference type="ExpressionAtlas" id="Q9CA57">
    <property type="expression patterns" value="baseline and differential"/>
</dbReference>
<dbReference type="GO" id="GO:0005737">
    <property type="term" value="C:cytoplasm"/>
    <property type="evidence" value="ECO:0000303"/>
    <property type="project" value="TAIR"/>
</dbReference>
<dbReference type="GO" id="GO:0005829">
    <property type="term" value="C:cytosol"/>
    <property type="evidence" value="ECO:0007669"/>
    <property type="project" value="UniProtKB-SubCell"/>
</dbReference>
<dbReference type="GO" id="GO:0004364">
    <property type="term" value="F:glutathione transferase activity"/>
    <property type="evidence" value="ECO:0007669"/>
    <property type="project" value="UniProtKB-EC"/>
</dbReference>
<dbReference type="GO" id="GO:0006749">
    <property type="term" value="P:glutathione metabolic process"/>
    <property type="evidence" value="ECO:0007669"/>
    <property type="project" value="InterPro"/>
</dbReference>
<dbReference type="GO" id="GO:0009407">
    <property type="term" value="P:toxin catabolic process"/>
    <property type="evidence" value="ECO:0000304"/>
    <property type="project" value="TAIR"/>
</dbReference>
<dbReference type="CDD" id="cd03185">
    <property type="entry name" value="GST_C_Tau"/>
    <property type="match status" value="1"/>
</dbReference>
<dbReference type="CDD" id="cd03058">
    <property type="entry name" value="GST_N_Tau"/>
    <property type="match status" value="1"/>
</dbReference>
<dbReference type="FunFam" id="1.20.1050.10:FF:000119">
    <property type="entry name" value="Glutathione S-transferase U10"/>
    <property type="match status" value="1"/>
</dbReference>
<dbReference type="FunFam" id="3.40.30.10:FF:000197">
    <property type="entry name" value="Glutathione S-transferase U10"/>
    <property type="match status" value="1"/>
</dbReference>
<dbReference type="Gene3D" id="1.20.1050.10">
    <property type="match status" value="1"/>
</dbReference>
<dbReference type="Gene3D" id="3.40.30.10">
    <property type="entry name" value="Glutaredoxin"/>
    <property type="match status" value="1"/>
</dbReference>
<dbReference type="InterPro" id="IPR010987">
    <property type="entry name" value="Glutathione-S-Trfase_C-like"/>
</dbReference>
<dbReference type="InterPro" id="IPR036282">
    <property type="entry name" value="Glutathione-S-Trfase_C_sf"/>
</dbReference>
<dbReference type="InterPro" id="IPR040079">
    <property type="entry name" value="Glutathione_S-Trfase"/>
</dbReference>
<dbReference type="InterPro" id="IPR004045">
    <property type="entry name" value="Glutathione_S-Trfase_N"/>
</dbReference>
<dbReference type="InterPro" id="IPR045074">
    <property type="entry name" value="GST_C_Tau"/>
</dbReference>
<dbReference type="InterPro" id="IPR045073">
    <property type="entry name" value="Omega/Tau-like"/>
</dbReference>
<dbReference type="InterPro" id="IPR036249">
    <property type="entry name" value="Thioredoxin-like_sf"/>
</dbReference>
<dbReference type="PANTHER" id="PTHR11260:SF775">
    <property type="entry name" value="GLUTATHIONE S-TRANSFERASE U10"/>
    <property type="match status" value="1"/>
</dbReference>
<dbReference type="PANTHER" id="PTHR11260">
    <property type="entry name" value="GLUTATHIONE S-TRANSFERASE, GST, SUPERFAMILY, GST DOMAIN CONTAINING"/>
    <property type="match status" value="1"/>
</dbReference>
<dbReference type="Pfam" id="PF02798">
    <property type="entry name" value="GST_N"/>
    <property type="match status" value="1"/>
</dbReference>
<dbReference type="SFLD" id="SFLDS00019">
    <property type="entry name" value="Glutathione_Transferase_(cytos"/>
    <property type="match status" value="1"/>
</dbReference>
<dbReference type="SFLD" id="SFLDG01152">
    <property type="entry name" value="Main.3:_Omega-_and_Tau-like"/>
    <property type="match status" value="1"/>
</dbReference>
<dbReference type="SUPFAM" id="SSF47616">
    <property type="entry name" value="GST C-terminal domain-like"/>
    <property type="match status" value="1"/>
</dbReference>
<dbReference type="SUPFAM" id="SSF52833">
    <property type="entry name" value="Thioredoxin-like"/>
    <property type="match status" value="1"/>
</dbReference>
<dbReference type="PROSITE" id="PS50405">
    <property type="entry name" value="GST_CTER"/>
    <property type="match status" value="1"/>
</dbReference>
<dbReference type="PROSITE" id="PS50404">
    <property type="entry name" value="GST_NTER"/>
    <property type="match status" value="1"/>
</dbReference>
<protein>
    <recommendedName>
        <fullName>Glutathione S-transferase U10</fullName>
        <shortName>AtGSTU10</shortName>
        <ecNumber>2.5.1.18</ecNumber>
    </recommendedName>
    <alternativeName>
        <fullName>GST class-tau member 10</fullName>
    </alternativeName>
</protein>
<gene>
    <name type="primary">GSTU10</name>
    <name type="ordered locus">At1g74590</name>
    <name type="ORF">F1M20.27</name>
</gene>
<name>GSTUA_ARATH</name>
<feature type="chain" id="PRO_0000413556" description="Glutathione S-transferase U10">
    <location>
        <begin position="1"/>
        <end position="232"/>
    </location>
</feature>
<feature type="domain" description="GST N-terminal">
    <location>
        <begin position="6"/>
        <end position="85"/>
    </location>
</feature>
<feature type="domain" description="GST C-terminal">
    <location>
        <begin position="91"/>
        <end position="226"/>
    </location>
</feature>
<feature type="binding site" evidence="1">
    <location>
        <begin position="16"/>
        <end position="17"/>
    </location>
    <ligand>
        <name>glutathione</name>
        <dbReference type="ChEBI" id="CHEBI:57925"/>
    </ligand>
</feature>
<feature type="binding site" evidence="1">
    <location>
        <begin position="42"/>
        <end position="43"/>
    </location>
    <ligand>
        <name>glutathione</name>
        <dbReference type="ChEBI" id="CHEBI:57925"/>
    </ligand>
</feature>
<feature type="binding site" evidence="1">
    <location>
        <begin position="56"/>
        <end position="57"/>
    </location>
    <ligand>
        <name>glutathione</name>
        <dbReference type="ChEBI" id="CHEBI:57925"/>
    </ligand>
</feature>
<feature type="binding site" evidence="1">
    <location>
        <begin position="69"/>
        <end position="70"/>
    </location>
    <ligand>
        <name>glutathione</name>
        <dbReference type="ChEBI" id="CHEBI:57925"/>
    </ligand>
</feature>
<keyword id="KW-0963">Cytoplasm</keyword>
<keyword id="KW-0216">Detoxification</keyword>
<keyword id="KW-1185">Reference proteome</keyword>
<keyword id="KW-0808">Transferase</keyword>
<evidence type="ECO:0000250" key="1"/>
<evidence type="ECO:0000305" key="2"/>
<reference key="1">
    <citation type="journal article" date="2000" name="Nature">
        <title>Sequence and analysis of chromosome 1 of the plant Arabidopsis thaliana.</title>
        <authorList>
            <person name="Theologis A."/>
            <person name="Ecker J.R."/>
            <person name="Palm C.J."/>
            <person name="Federspiel N.A."/>
            <person name="Kaul S."/>
            <person name="White O."/>
            <person name="Alonso J."/>
            <person name="Altafi H."/>
            <person name="Araujo R."/>
            <person name="Bowman C.L."/>
            <person name="Brooks S.Y."/>
            <person name="Buehler E."/>
            <person name="Chan A."/>
            <person name="Chao Q."/>
            <person name="Chen H."/>
            <person name="Cheuk R.F."/>
            <person name="Chin C.W."/>
            <person name="Chung M.K."/>
            <person name="Conn L."/>
            <person name="Conway A.B."/>
            <person name="Conway A.R."/>
            <person name="Creasy T.H."/>
            <person name="Dewar K."/>
            <person name="Dunn P."/>
            <person name="Etgu P."/>
            <person name="Feldblyum T.V."/>
            <person name="Feng J.-D."/>
            <person name="Fong B."/>
            <person name="Fujii C.Y."/>
            <person name="Gill J.E."/>
            <person name="Goldsmith A.D."/>
            <person name="Haas B."/>
            <person name="Hansen N.F."/>
            <person name="Hughes B."/>
            <person name="Huizar L."/>
            <person name="Hunter J.L."/>
            <person name="Jenkins J."/>
            <person name="Johnson-Hopson C."/>
            <person name="Khan S."/>
            <person name="Khaykin E."/>
            <person name="Kim C.J."/>
            <person name="Koo H.L."/>
            <person name="Kremenetskaia I."/>
            <person name="Kurtz D.B."/>
            <person name="Kwan A."/>
            <person name="Lam B."/>
            <person name="Langin-Hooper S."/>
            <person name="Lee A."/>
            <person name="Lee J.M."/>
            <person name="Lenz C.A."/>
            <person name="Li J.H."/>
            <person name="Li Y.-P."/>
            <person name="Lin X."/>
            <person name="Liu S.X."/>
            <person name="Liu Z.A."/>
            <person name="Luros J.S."/>
            <person name="Maiti R."/>
            <person name="Marziali A."/>
            <person name="Militscher J."/>
            <person name="Miranda M."/>
            <person name="Nguyen M."/>
            <person name="Nierman W.C."/>
            <person name="Osborne B.I."/>
            <person name="Pai G."/>
            <person name="Peterson J."/>
            <person name="Pham P.K."/>
            <person name="Rizzo M."/>
            <person name="Rooney T."/>
            <person name="Rowley D."/>
            <person name="Sakano H."/>
            <person name="Salzberg S.L."/>
            <person name="Schwartz J.R."/>
            <person name="Shinn P."/>
            <person name="Southwick A.M."/>
            <person name="Sun H."/>
            <person name="Tallon L.J."/>
            <person name="Tambunga G."/>
            <person name="Toriumi M.J."/>
            <person name="Town C.D."/>
            <person name="Utterback T."/>
            <person name="Van Aken S."/>
            <person name="Vaysberg M."/>
            <person name="Vysotskaia V.S."/>
            <person name="Walker M."/>
            <person name="Wu D."/>
            <person name="Yu G."/>
            <person name="Fraser C.M."/>
            <person name="Venter J.C."/>
            <person name="Davis R.W."/>
        </authorList>
    </citation>
    <scope>NUCLEOTIDE SEQUENCE [LARGE SCALE GENOMIC DNA]</scope>
    <source>
        <strain>cv. Columbia</strain>
    </source>
</reference>
<reference key="2">
    <citation type="journal article" date="2017" name="Plant J.">
        <title>Araport11: a complete reannotation of the Arabidopsis thaliana reference genome.</title>
        <authorList>
            <person name="Cheng C.Y."/>
            <person name="Krishnakumar V."/>
            <person name="Chan A.P."/>
            <person name="Thibaud-Nissen F."/>
            <person name="Schobel S."/>
            <person name="Town C.D."/>
        </authorList>
    </citation>
    <scope>GENOME REANNOTATION</scope>
    <source>
        <strain>cv. Columbia</strain>
    </source>
</reference>
<reference key="3">
    <citation type="journal article" date="2002" name="Science">
        <title>Functional annotation of a full-length Arabidopsis cDNA collection.</title>
        <authorList>
            <person name="Seki M."/>
            <person name="Narusaka M."/>
            <person name="Kamiya A."/>
            <person name="Ishida J."/>
            <person name="Satou M."/>
            <person name="Sakurai T."/>
            <person name="Nakajima M."/>
            <person name="Enju A."/>
            <person name="Akiyama K."/>
            <person name="Oono Y."/>
            <person name="Muramatsu M."/>
            <person name="Hayashizaki Y."/>
            <person name="Kawai J."/>
            <person name="Carninci P."/>
            <person name="Itoh M."/>
            <person name="Ishii Y."/>
            <person name="Arakawa T."/>
            <person name="Shibata K."/>
            <person name="Shinagawa A."/>
            <person name="Shinozaki K."/>
        </authorList>
    </citation>
    <scope>NUCLEOTIDE SEQUENCE [LARGE SCALE MRNA]</scope>
    <source>
        <strain>cv. Columbia</strain>
    </source>
</reference>
<reference key="4">
    <citation type="journal article" date="2003" name="Science">
        <title>Empirical analysis of transcriptional activity in the Arabidopsis genome.</title>
        <authorList>
            <person name="Yamada K."/>
            <person name="Lim J."/>
            <person name="Dale J.M."/>
            <person name="Chen H."/>
            <person name="Shinn P."/>
            <person name="Palm C.J."/>
            <person name="Southwick A.M."/>
            <person name="Wu H.C."/>
            <person name="Kim C.J."/>
            <person name="Nguyen M."/>
            <person name="Pham P.K."/>
            <person name="Cheuk R.F."/>
            <person name="Karlin-Newmann G."/>
            <person name="Liu S.X."/>
            <person name="Lam B."/>
            <person name="Sakano H."/>
            <person name="Wu T."/>
            <person name="Yu G."/>
            <person name="Miranda M."/>
            <person name="Quach H.L."/>
            <person name="Tripp M."/>
            <person name="Chang C.H."/>
            <person name="Lee J.M."/>
            <person name="Toriumi M.J."/>
            <person name="Chan M.M."/>
            <person name="Tang C.C."/>
            <person name="Onodera C.S."/>
            <person name="Deng J.M."/>
            <person name="Akiyama K."/>
            <person name="Ansari Y."/>
            <person name="Arakawa T."/>
            <person name="Banh J."/>
            <person name="Banno F."/>
            <person name="Bowser L."/>
            <person name="Brooks S.Y."/>
            <person name="Carninci P."/>
            <person name="Chao Q."/>
            <person name="Choy N."/>
            <person name="Enju A."/>
            <person name="Goldsmith A.D."/>
            <person name="Gurjal M."/>
            <person name="Hansen N.F."/>
            <person name="Hayashizaki Y."/>
            <person name="Johnson-Hopson C."/>
            <person name="Hsuan V.W."/>
            <person name="Iida K."/>
            <person name="Karnes M."/>
            <person name="Khan S."/>
            <person name="Koesema E."/>
            <person name="Ishida J."/>
            <person name="Jiang P.X."/>
            <person name="Jones T."/>
            <person name="Kawai J."/>
            <person name="Kamiya A."/>
            <person name="Meyers C."/>
            <person name="Nakajima M."/>
            <person name="Narusaka M."/>
            <person name="Seki M."/>
            <person name="Sakurai T."/>
            <person name="Satou M."/>
            <person name="Tamse R."/>
            <person name="Vaysberg M."/>
            <person name="Wallender E.K."/>
            <person name="Wong C."/>
            <person name="Yamamura Y."/>
            <person name="Yuan S."/>
            <person name="Shinozaki K."/>
            <person name="Davis R.W."/>
            <person name="Theologis A."/>
            <person name="Ecker J.R."/>
        </authorList>
    </citation>
    <scope>NUCLEOTIDE SEQUENCE [LARGE SCALE MRNA]</scope>
    <source>
        <strain>cv. Columbia</strain>
    </source>
</reference>
<reference key="5">
    <citation type="submission" date="2002-03" db="EMBL/GenBank/DDBJ databases">
        <title>Full-length cDNA from Arabidopsis thaliana.</title>
        <authorList>
            <person name="Brover V.V."/>
            <person name="Troukhan M.E."/>
            <person name="Alexandrov N.A."/>
            <person name="Lu Y.-P."/>
            <person name="Flavell R.B."/>
            <person name="Feldmann K.A."/>
        </authorList>
    </citation>
    <scope>NUCLEOTIDE SEQUENCE [LARGE SCALE MRNA]</scope>
</reference>
<reference key="6">
    <citation type="journal article" date="2002" name="Plant Mol. Biol.">
        <title>Probing the diversity of the Arabidopsis glutathione S-transferase gene family.</title>
        <authorList>
            <person name="Wagner U."/>
            <person name="Edwards R."/>
            <person name="Dixon D.P."/>
            <person name="Mauch F."/>
        </authorList>
    </citation>
    <scope>GENE FAMILY</scope>
    <scope>NOMENCLATURE</scope>
</reference>
<accession>Q9CA57</accession>
<comment type="function">
    <text evidence="1">May be involved in the conjugation of reduced glutathione to a wide number of exogenous and endogenous hydrophobic electrophiles and have a detoxification role against certain herbicides.</text>
</comment>
<comment type="catalytic activity">
    <reaction>
        <text>RX + glutathione = an S-substituted glutathione + a halide anion + H(+)</text>
        <dbReference type="Rhea" id="RHEA:16437"/>
        <dbReference type="ChEBI" id="CHEBI:15378"/>
        <dbReference type="ChEBI" id="CHEBI:16042"/>
        <dbReference type="ChEBI" id="CHEBI:17792"/>
        <dbReference type="ChEBI" id="CHEBI:57925"/>
        <dbReference type="ChEBI" id="CHEBI:90779"/>
        <dbReference type="EC" id="2.5.1.18"/>
    </reaction>
</comment>
<comment type="subcellular location">
    <subcellularLocation>
        <location evidence="2">Cytoplasm</location>
        <location evidence="2">Cytosol</location>
    </subcellularLocation>
</comment>
<comment type="similarity">
    <text evidence="2">Belongs to the GST superfamily. Tau family.</text>
</comment>
<proteinExistence type="evidence at transcript level"/>
<sequence length="232" mass="26805">MEEKKSKVILHGTWISTYSKRVEIALKLKGVLYEYLEEDLQNKSESLIQLNPVHKKIPVLVHDGKPVAESLVILEYIDETWTNSPRFFPEDPYERAQVRFWVSYINQQVFEVMGQVMSQEGEAQAKSVEEARKRFKVLDEGLKKHFPNKNIRRNDDVGLLEITIIATLGGYKAHREAIGVDIIGPVNTPTLYNWIERLQDLSVIKEVEVPHDTLVTFIQKYRQKCLQQAANA</sequence>